<organism>
    <name type="scientific">Dictyostelium discoideum</name>
    <name type="common">Social amoeba</name>
    <dbReference type="NCBI Taxonomy" id="44689"/>
    <lineage>
        <taxon>Eukaryota</taxon>
        <taxon>Amoebozoa</taxon>
        <taxon>Evosea</taxon>
        <taxon>Eumycetozoa</taxon>
        <taxon>Dictyostelia</taxon>
        <taxon>Dictyosteliales</taxon>
        <taxon>Dictyosteliaceae</taxon>
        <taxon>Dictyostelium</taxon>
    </lineage>
</organism>
<proteinExistence type="inferred from homology"/>
<comment type="function">
    <text evidence="2">Component of the signal recognition particle (SRP) complex, a ribonucleoprotein complex that mediates the cotranslational targeting of secretory and membrane proteins to the endoplasmic reticulum (ER) (By similarity). Srp9 together with srp14 and the Alu portion of the SRP RNA, constitutes the elongation arrest domain of SRP (By similarity). The complex of srp9 and srp14 is required for SRP RNA binding (By similarity).</text>
</comment>
<comment type="subunit">
    <text evidence="2 3">Heterodimer with srp14; binds RNA as heterodimer (By similarity). Component of a signal recognition particle complex that consists of a 7SL RNA molecule and six protein subunits: srp72, srp68, srp54, srp19, srp14 and srp9 (By similarity).</text>
</comment>
<comment type="subcellular location">
    <subcellularLocation>
        <location evidence="1">Cytoplasm</location>
    </subcellularLocation>
</comment>
<comment type="similarity">
    <text evidence="4">Belongs to the SRP9 family.</text>
</comment>
<reference key="1">
    <citation type="journal article" date="2005" name="Nature">
        <title>The genome of the social amoeba Dictyostelium discoideum.</title>
        <authorList>
            <person name="Eichinger L."/>
            <person name="Pachebat J.A."/>
            <person name="Gloeckner G."/>
            <person name="Rajandream M.A."/>
            <person name="Sucgang R."/>
            <person name="Berriman M."/>
            <person name="Song J."/>
            <person name="Olsen R."/>
            <person name="Szafranski K."/>
            <person name="Xu Q."/>
            <person name="Tunggal B."/>
            <person name="Kummerfeld S."/>
            <person name="Madera M."/>
            <person name="Konfortov B.A."/>
            <person name="Rivero F."/>
            <person name="Bankier A.T."/>
            <person name="Lehmann R."/>
            <person name="Hamlin N."/>
            <person name="Davies R."/>
            <person name="Gaudet P."/>
            <person name="Fey P."/>
            <person name="Pilcher K."/>
            <person name="Chen G."/>
            <person name="Saunders D."/>
            <person name="Sodergren E.J."/>
            <person name="Davis P."/>
            <person name="Kerhornou A."/>
            <person name="Nie X."/>
            <person name="Hall N."/>
            <person name="Anjard C."/>
            <person name="Hemphill L."/>
            <person name="Bason N."/>
            <person name="Farbrother P."/>
            <person name="Desany B."/>
            <person name="Just E."/>
            <person name="Morio T."/>
            <person name="Rost R."/>
            <person name="Churcher C.M."/>
            <person name="Cooper J."/>
            <person name="Haydock S."/>
            <person name="van Driessche N."/>
            <person name="Cronin A."/>
            <person name="Goodhead I."/>
            <person name="Muzny D.M."/>
            <person name="Mourier T."/>
            <person name="Pain A."/>
            <person name="Lu M."/>
            <person name="Harper D."/>
            <person name="Lindsay R."/>
            <person name="Hauser H."/>
            <person name="James K.D."/>
            <person name="Quiles M."/>
            <person name="Madan Babu M."/>
            <person name="Saito T."/>
            <person name="Buchrieser C."/>
            <person name="Wardroper A."/>
            <person name="Felder M."/>
            <person name="Thangavelu M."/>
            <person name="Johnson D."/>
            <person name="Knights A."/>
            <person name="Loulseged H."/>
            <person name="Mungall K.L."/>
            <person name="Oliver K."/>
            <person name="Price C."/>
            <person name="Quail M.A."/>
            <person name="Urushihara H."/>
            <person name="Hernandez J."/>
            <person name="Rabbinowitsch E."/>
            <person name="Steffen D."/>
            <person name="Sanders M."/>
            <person name="Ma J."/>
            <person name="Kohara Y."/>
            <person name="Sharp S."/>
            <person name="Simmonds M.N."/>
            <person name="Spiegler S."/>
            <person name="Tivey A."/>
            <person name="Sugano S."/>
            <person name="White B."/>
            <person name="Walker D."/>
            <person name="Woodward J.R."/>
            <person name="Winckler T."/>
            <person name="Tanaka Y."/>
            <person name="Shaulsky G."/>
            <person name="Schleicher M."/>
            <person name="Weinstock G.M."/>
            <person name="Rosenthal A."/>
            <person name="Cox E.C."/>
            <person name="Chisholm R.L."/>
            <person name="Gibbs R.A."/>
            <person name="Loomis W.F."/>
            <person name="Platzer M."/>
            <person name="Kay R.R."/>
            <person name="Williams J.G."/>
            <person name="Dear P.H."/>
            <person name="Noegel A.A."/>
            <person name="Barrell B.G."/>
            <person name="Kuspa A."/>
        </authorList>
    </citation>
    <scope>NUCLEOTIDE SEQUENCE [LARGE SCALE GENOMIC DNA]</scope>
    <source>
        <strain>AX4</strain>
    </source>
</reference>
<protein>
    <recommendedName>
        <fullName>Signal recognition particle 9 kDa protein</fullName>
        <shortName>SRP9</shortName>
    </recommendedName>
</protein>
<name>SRP09_DICDI</name>
<gene>
    <name type="primary">srp9</name>
    <name type="ORF">DDB_G0267622</name>
</gene>
<dbReference type="EMBL" id="AAFI02000003">
    <property type="protein sequence ID" value="EAL73264.1"/>
    <property type="molecule type" value="Genomic_DNA"/>
</dbReference>
<dbReference type="RefSeq" id="XP_647172.1">
    <property type="nucleotide sequence ID" value="XM_642080.1"/>
</dbReference>
<dbReference type="SMR" id="Q55GL2"/>
<dbReference type="FunCoup" id="Q55GL2">
    <property type="interactions" value="268"/>
</dbReference>
<dbReference type="STRING" id="44689.Q55GL2"/>
<dbReference type="PaxDb" id="44689-DDB0232378"/>
<dbReference type="EnsemblProtists" id="EAL73264">
    <property type="protein sequence ID" value="EAL73264"/>
    <property type="gene ID" value="DDB_G0267622"/>
</dbReference>
<dbReference type="GeneID" id="8615975"/>
<dbReference type="KEGG" id="ddi:DDB_G0267622"/>
<dbReference type="dictyBase" id="DDB_G0267622">
    <property type="gene designation" value="srp9"/>
</dbReference>
<dbReference type="VEuPathDB" id="AmoebaDB:DDB_G0267622"/>
<dbReference type="eggNOG" id="KOG3465">
    <property type="taxonomic scope" value="Eukaryota"/>
</dbReference>
<dbReference type="HOGENOM" id="CLU_144337_3_0_1"/>
<dbReference type="InParanoid" id="Q55GL2"/>
<dbReference type="OMA" id="DPMKVRF"/>
<dbReference type="PhylomeDB" id="Q55GL2"/>
<dbReference type="Reactome" id="R-DDI-1799339">
    <property type="pathway name" value="SRP-dependent cotranslational protein targeting to membrane"/>
</dbReference>
<dbReference type="PRO" id="PR:Q55GL2"/>
<dbReference type="Proteomes" id="UP000002195">
    <property type="component" value="Chromosome 1"/>
</dbReference>
<dbReference type="GO" id="GO:0005786">
    <property type="term" value="C:signal recognition particle, endoplasmic reticulum targeting"/>
    <property type="evidence" value="ECO:0000318"/>
    <property type="project" value="GO_Central"/>
</dbReference>
<dbReference type="GO" id="GO:0008312">
    <property type="term" value="F:7S RNA binding"/>
    <property type="evidence" value="ECO:0007669"/>
    <property type="project" value="InterPro"/>
</dbReference>
<dbReference type="GO" id="GO:0045900">
    <property type="term" value="P:negative regulation of translational elongation"/>
    <property type="evidence" value="ECO:0007669"/>
    <property type="project" value="InterPro"/>
</dbReference>
<dbReference type="GO" id="GO:0006614">
    <property type="term" value="P:SRP-dependent cotranslational protein targeting to membrane"/>
    <property type="evidence" value="ECO:0000318"/>
    <property type="project" value="GO_Central"/>
</dbReference>
<dbReference type="FunFam" id="3.30.720.10:FF:000001">
    <property type="entry name" value="Signal recognition particle 9 kDa protein"/>
    <property type="match status" value="1"/>
</dbReference>
<dbReference type="Gene3D" id="3.30.720.10">
    <property type="entry name" value="Signal recognition particle alu RNA binding heterodimer, srp9/1"/>
    <property type="match status" value="1"/>
</dbReference>
<dbReference type="InterPro" id="IPR009018">
    <property type="entry name" value="Signal_recog_particle_SRP9/14"/>
</dbReference>
<dbReference type="InterPro" id="IPR008832">
    <property type="entry name" value="SRP9"/>
</dbReference>
<dbReference type="InterPro" id="IPR039914">
    <property type="entry name" value="SRP9-like"/>
</dbReference>
<dbReference type="InterPro" id="IPR039432">
    <property type="entry name" value="SRP9_dom"/>
</dbReference>
<dbReference type="PANTHER" id="PTHR12834">
    <property type="entry name" value="SIGNAL RECOGNITION PARTICLE 9 KDA PROTEIN"/>
    <property type="match status" value="1"/>
</dbReference>
<dbReference type="PANTHER" id="PTHR12834:SF12">
    <property type="entry name" value="SIGNAL RECOGNITION PARTICLE 9 KDA PROTEIN"/>
    <property type="match status" value="1"/>
</dbReference>
<dbReference type="Pfam" id="PF05486">
    <property type="entry name" value="SRP9-21"/>
    <property type="match status" value="1"/>
</dbReference>
<dbReference type="PIRSF" id="PIRSF017029">
    <property type="entry name" value="Signal_recog_particle_SRP9"/>
    <property type="match status" value="1"/>
</dbReference>
<dbReference type="SUPFAM" id="SSF54762">
    <property type="entry name" value="Signal recognition particle alu RNA binding heterodimer, SRP9/14"/>
    <property type="match status" value="1"/>
</dbReference>
<accession>Q55GL2</accession>
<evidence type="ECO:0000250" key="1"/>
<evidence type="ECO:0000250" key="2">
    <source>
        <dbReference type="UniProtKB" id="P21262"/>
    </source>
</evidence>
<evidence type="ECO:0000250" key="3">
    <source>
        <dbReference type="UniProtKB" id="P49458"/>
    </source>
</evidence>
<evidence type="ECO:0000305" key="4"/>
<sequence>MYIEDWDEFYDKSEQLYRTDPKRTRFSFKFRHVEGKVVLKVTNDTVNLKFQTDKENDFKRIDQINSLFFRLTTEQ</sequence>
<feature type="chain" id="PRO_0000322234" description="Signal recognition particle 9 kDa protein">
    <location>
        <begin position="1"/>
        <end position="75"/>
    </location>
</feature>
<keyword id="KW-0963">Cytoplasm</keyword>
<keyword id="KW-1185">Reference proteome</keyword>
<keyword id="KW-0687">Ribonucleoprotein</keyword>
<keyword id="KW-0694">RNA-binding</keyword>
<keyword id="KW-0733">Signal recognition particle</keyword>